<reference key="1">
    <citation type="journal article" date="2000" name="Nature">
        <title>DNA sequence of both chromosomes of the cholera pathogen Vibrio cholerae.</title>
        <authorList>
            <person name="Heidelberg J.F."/>
            <person name="Eisen J.A."/>
            <person name="Nelson W.C."/>
            <person name="Clayton R.A."/>
            <person name="Gwinn M.L."/>
            <person name="Dodson R.J."/>
            <person name="Haft D.H."/>
            <person name="Hickey E.K."/>
            <person name="Peterson J.D."/>
            <person name="Umayam L.A."/>
            <person name="Gill S.R."/>
            <person name="Nelson K.E."/>
            <person name="Read T.D."/>
            <person name="Tettelin H."/>
            <person name="Richardson D.L."/>
            <person name="Ermolaeva M.D."/>
            <person name="Vamathevan J.J."/>
            <person name="Bass S."/>
            <person name="Qin H."/>
            <person name="Dragoi I."/>
            <person name="Sellers P."/>
            <person name="McDonald L.A."/>
            <person name="Utterback T.R."/>
            <person name="Fleischmann R.D."/>
            <person name="Nierman W.C."/>
            <person name="White O."/>
            <person name="Salzberg S.L."/>
            <person name="Smith H.O."/>
            <person name="Colwell R.R."/>
            <person name="Mekalanos J.J."/>
            <person name="Venter J.C."/>
            <person name="Fraser C.M."/>
        </authorList>
    </citation>
    <scope>NUCLEOTIDE SEQUENCE [LARGE SCALE GENOMIC DNA]</scope>
    <source>
        <strain>ATCC 39315 / El Tor Inaba N16961</strain>
    </source>
</reference>
<protein>
    <recommendedName>
        <fullName evidence="1">Elongation factor G 1</fullName>
        <shortName evidence="1">EF-G 1</shortName>
    </recommendedName>
</protein>
<feature type="chain" id="PRO_0000091259" description="Elongation factor G 1">
    <location>
        <begin position="1"/>
        <end position="698"/>
    </location>
</feature>
<feature type="domain" description="tr-type G">
    <location>
        <begin position="8"/>
        <end position="290"/>
    </location>
</feature>
<feature type="binding site" evidence="1">
    <location>
        <begin position="17"/>
        <end position="24"/>
    </location>
    <ligand>
        <name>GTP</name>
        <dbReference type="ChEBI" id="CHEBI:37565"/>
    </ligand>
</feature>
<feature type="binding site" evidence="1">
    <location>
        <begin position="88"/>
        <end position="92"/>
    </location>
    <ligand>
        <name>GTP</name>
        <dbReference type="ChEBI" id="CHEBI:37565"/>
    </ligand>
</feature>
<feature type="binding site" evidence="1">
    <location>
        <begin position="142"/>
        <end position="145"/>
    </location>
    <ligand>
        <name>GTP</name>
        <dbReference type="ChEBI" id="CHEBI:37565"/>
    </ligand>
</feature>
<dbReference type="EMBL" id="AE003852">
    <property type="protein sequence ID" value="AAF93534.1"/>
    <property type="molecule type" value="Genomic_DNA"/>
</dbReference>
<dbReference type="PIR" id="C82332">
    <property type="entry name" value="C82332"/>
</dbReference>
<dbReference type="RefSeq" id="NP_230015.1">
    <property type="nucleotide sequence ID" value="NC_002505.1"/>
</dbReference>
<dbReference type="SMR" id="Q9KUZ7"/>
<dbReference type="STRING" id="243277.VC_0361"/>
<dbReference type="DNASU" id="2615040"/>
<dbReference type="EnsemblBacteria" id="AAF93534">
    <property type="protein sequence ID" value="AAF93534"/>
    <property type="gene ID" value="VC_0361"/>
</dbReference>
<dbReference type="KEGG" id="vch:VC_0361"/>
<dbReference type="PATRIC" id="fig|243277.26.peg.338"/>
<dbReference type="eggNOG" id="COG0480">
    <property type="taxonomic scope" value="Bacteria"/>
</dbReference>
<dbReference type="HOGENOM" id="CLU_002794_4_1_6"/>
<dbReference type="Proteomes" id="UP000000584">
    <property type="component" value="Chromosome 1"/>
</dbReference>
<dbReference type="GO" id="GO:0005829">
    <property type="term" value="C:cytosol"/>
    <property type="evidence" value="ECO:0000318"/>
    <property type="project" value="GO_Central"/>
</dbReference>
<dbReference type="GO" id="GO:0005525">
    <property type="term" value="F:GTP binding"/>
    <property type="evidence" value="ECO:0007669"/>
    <property type="project" value="UniProtKB-UniRule"/>
</dbReference>
<dbReference type="GO" id="GO:0003924">
    <property type="term" value="F:GTPase activity"/>
    <property type="evidence" value="ECO:0007669"/>
    <property type="project" value="InterPro"/>
</dbReference>
<dbReference type="GO" id="GO:0097216">
    <property type="term" value="F:guanosine tetraphosphate binding"/>
    <property type="evidence" value="ECO:0007669"/>
    <property type="project" value="UniProtKB-ARBA"/>
</dbReference>
<dbReference type="GO" id="GO:0003746">
    <property type="term" value="F:translation elongation factor activity"/>
    <property type="evidence" value="ECO:0007669"/>
    <property type="project" value="UniProtKB-UniRule"/>
</dbReference>
<dbReference type="GO" id="GO:0032790">
    <property type="term" value="P:ribosome disassembly"/>
    <property type="evidence" value="ECO:0000318"/>
    <property type="project" value="GO_Central"/>
</dbReference>
<dbReference type="CDD" id="cd01886">
    <property type="entry name" value="EF-G"/>
    <property type="match status" value="1"/>
</dbReference>
<dbReference type="CDD" id="cd16262">
    <property type="entry name" value="EFG_III"/>
    <property type="match status" value="1"/>
</dbReference>
<dbReference type="CDD" id="cd01434">
    <property type="entry name" value="EFG_mtEFG1_IV"/>
    <property type="match status" value="1"/>
</dbReference>
<dbReference type="CDD" id="cd03713">
    <property type="entry name" value="EFG_mtEFG_C"/>
    <property type="match status" value="1"/>
</dbReference>
<dbReference type="CDD" id="cd04088">
    <property type="entry name" value="EFG_mtEFG_II"/>
    <property type="match status" value="1"/>
</dbReference>
<dbReference type="FunFam" id="2.40.30.10:FF:000006">
    <property type="entry name" value="Elongation factor G"/>
    <property type="match status" value="1"/>
</dbReference>
<dbReference type="FunFam" id="3.30.230.10:FF:000003">
    <property type="entry name" value="Elongation factor G"/>
    <property type="match status" value="1"/>
</dbReference>
<dbReference type="FunFam" id="3.30.70.240:FF:000001">
    <property type="entry name" value="Elongation factor G"/>
    <property type="match status" value="1"/>
</dbReference>
<dbReference type="FunFam" id="3.30.70.870:FF:000001">
    <property type="entry name" value="Elongation factor G"/>
    <property type="match status" value="1"/>
</dbReference>
<dbReference type="FunFam" id="3.40.50.300:FF:000029">
    <property type="entry name" value="Elongation factor G"/>
    <property type="match status" value="1"/>
</dbReference>
<dbReference type="Gene3D" id="3.30.230.10">
    <property type="match status" value="1"/>
</dbReference>
<dbReference type="Gene3D" id="3.30.70.240">
    <property type="match status" value="1"/>
</dbReference>
<dbReference type="Gene3D" id="3.30.70.870">
    <property type="entry name" value="Elongation Factor G (Translational Gtpase), domain 3"/>
    <property type="match status" value="1"/>
</dbReference>
<dbReference type="Gene3D" id="3.40.50.300">
    <property type="entry name" value="P-loop containing nucleotide triphosphate hydrolases"/>
    <property type="match status" value="1"/>
</dbReference>
<dbReference type="Gene3D" id="2.40.30.10">
    <property type="entry name" value="Translation factors"/>
    <property type="match status" value="1"/>
</dbReference>
<dbReference type="HAMAP" id="MF_00054_B">
    <property type="entry name" value="EF_G_EF_2_B"/>
    <property type="match status" value="1"/>
</dbReference>
<dbReference type="InterPro" id="IPR041095">
    <property type="entry name" value="EFG_II"/>
</dbReference>
<dbReference type="InterPro" id="IPR009022">
    <property type="entry name" value="EFG_III"/>
</dbReference>
<dbReference type="InterPro" id="IPR035647">
    <property type="entry name" value="EFG_III/V"/>
</dbReference>
<dbReference type="InterPro" id="IPR047872">
    <property type="entry name" value="EFG_IV"/>
</dbReference>
<dbReference type="InterPro" id="IPR035649">
    <property type="entry name" value="EFG_V"/>
</dbReference>
<dbReference type="InterPro" id="IPR000640">
    <property type="entry name" value="EFG_V-like"/>
</dbReference>
<dbReference type="InterPro" id="IPR004161">
    <property type="entry name" value="EFTu-like_2"/>
</dbReference>
<dbReference type="InterPro" id="IPR031157">
    <property type="entry name" value="G_TR_CS"/>
</dbReference>
<dbReference type="InterPro" id="IPR027417">
    <property type="entry name" value="P-loop_NTPase"/>
</dbReference>
<dbReference type="InterPro" id="IPR020568">
    <property type="entry name" value="Ribosomal_Su5_D2-typ_SF"/>
</dbReference>
<dbReference type="InterPro" id="IPR014721">
    <property type="entry name" value="Ribsml_uS5_D2-typ_fold_subgr"/>
</dbReference>
<dbReference type="InterPro" id="IPR005225">
    <property type="entry name" value="Small_GTP-bd"/>
</dbReference>
<dbReference type="InterPro" id="IPR000795">
    <property type="entry name" value="T_Tr_GTP-bd_dom"/>
</dbReference>
<dbReference type="InterPro" id="IPR009000">
    <property type="entry name" value="Transl_B-barrel_sf"/>
</dbReference>
<dbReference type="InterPro" id="IPR004540">
    <property type="entry name" value="Transl_elong_EFG/EF2"/>
</dbReference>
<dbReference type="InterPro" id="IPR005517">
    <property type="entry name" value="Transl_elong_EFG/EF2_IV"/>
</dbReference>
<dbReference type="NCBIfam" id="TIGR00484">
    <property type="entry name" value="EF-G"/>
    <property type="match status" value="1"/>
</dbReference>
<dbReference type="NCBIfam" id="NF009381">
    <property type="entry name" value="PRK12740.1-5"/>
    <property type="match status" value="1"/>
</dbReference>
<dbReference type="NCBIfam" id="TIGR00231">
    <property type="entry name" value="small_GTP"/>
    <property type="match status" value="1"/>
</dbReference>
<dbReference type="PANTHER" id="PTHR43261:SF1">
    <property type="entry name" value="RIBOSOME-RELEASING FACTOR 2, MITOCHONDRIAL"/>
    <property type="match status" value="1"/>
</dbReference>
<dbReference type="PANTHER" id="PTHR43261">
    <property type="entry name" value="TRANSLATION ELONGATION FACTOR G-RELATED"/>
    <property type="match status" value="1"/>
</dbReference>
<dbReference type="Pfam" id="PF00679">
    <property type="entry name" value="EFG_C"/>
    <property type="match status" value="1"/>
</dbReference>
<dbReference type="Pfam" id="PF14492">
    <property type="entry name" value="EFG_III"/>
    <property type="match status" value="1"/>
</dbReference>
<dbReference type="Pfam" id="PF03764">
    <property type="entry name" value="EFG_IV"/>
    <property type="match status" value="1"/>
</dbReference>
<dbReference type="Pfam" id="PF00009">
    <property type="entry name" value="GTP_EFTU"/>
    <property type="match status" value="1"/>
</dbReference>
<dbReference type="Pfam" id="PF03144">
    <property type="entry name" value="GTP_EFTU_D2"/>
    <property type="match status" value="1"/>
</dbReference>
<dbReference type="PRINTS" id="PR00315">
    <property type="entry name" value="ELONGATNFCT"/>
</dbReference>
<dbReference type="SMART" id="SM00838">
    <property type="entry name" value="EFG_C"/>
    <property type="match status" value="1"/>
</dbReference>
<dbReference type="SMART" id="SM00889">
    <property type="entry name" value="EFG_IV"/>
    <property type="match status" value="1"/>
</dbReference>
<dbReference type="SUPFAM" id="SSF54980">
    <property type="entry name" value="EF-G C-terminal domain-like"/>
    <property type="match status" value="2"/>
</dbReference>
<dbReference type="SUPFAM" id="SSF52540">
    <property type="entry name" value="P-loop containing nucleoside triphosphate hydrolases"/>
    <property type="match status" value="1"/>
</dbReference>
<dbReference type="SUPFAM" id="SSF54211">
    <property type="entry name" value="Ribosomal protein S5 domain 2-like"/>
    <property type="match status" value="1"/>
</dbReference>
<dbReference type="SUPFAM" id="SSF50447">
    <property type="entry name" value="Translation proteins"/>
    <property type="match status" value="1"/>
</dbReference>
<dbReference type="PROSITE" id="PS00301">
    <property type="entry name" value="G_TR_1"/>
    <property type="match status" value="1"/>
</dbReference>
<dbReference type="PROSITE" id="PS51722">
    <property type="entry name" value="G_TR_2"/>
    <property type="match status" value="1"/>
</dbReference>
<sequence length="698" mass="76927">MARKTPIERYRNIGICAHVDAGKTTTTERILFYTGLSHKIGEVHDGAATMDWMVQEQERGITITSAATTTFWRGMEAQFQEHRINIIDTPGHVDFTIEVERSLRVLDGAVVVFCGTSGVEPQSETVWRQADKYGVPRMVFVNKMDRAGADFLRVVGQIKHRLGANPVPIQLNIGAEEEFKGVIDLIKMKAINWNEADQGMSFTYEEIPADMLELAQEWRNHLVEAAAEASEELMEKYLEDGELSEVEIKQALRQRTINNEIVLAACGSAFKNKGVQAVLDAVIEFLPSPTDVPAIKGIDDRENSVERHADDNEPFSSLAFKIATDPFVGSLTFIRVYSGVVNSGDAVYNSVKQKKERFGRIVQMHANKRDEIKEIRAGDIAAAIGLKDVTTGDTLCDPNHVVILERMEFPEPVIQIAVEPRSKADQEKMGIALGKLAAEDPSFRVETDAETGQTLISGMGELHLDIIVDRMKREFGVDCNVGKPQVAYRETIRGKSEVEGKFVRQSGGRGQYGHVWLKIEPAEPGQGFVFVDAIAGGVIPKEFINPVAKGIEEQMNNGVLAGYPVLDVKATLFDGSFHDVDSSEMAFKIAGSMAFKKGALEAQPVLLEPLMKVEITTPEDWMGDVVGDLNRRRGIIEGMDEGPAGLKIIHAKVPLSEMFGYATDLRSATQGRASYSMEFAEYADVPKNIADAIIAEHG</sequence>
<gene>
    <name evidence="1" type="primary">fusA1</name>
    <name type="ordered locus">VC_0361</name>
</gene>
<name>EFG1_VIBCH</name>
<organism>
    <name type="scientific">Vibrio cholerae serotype O1 (strain ATCC 39315 / El Tor Inaba N16961)</name>
    <dbReference type="NCBI Taxonomy" id="243277"/>
    <lineage>
        <taxon>Bacteria</taxon>
        <taxon>Pseudomonadati</taxon>
        <taxon>Pseudomonadota</taxon>
        <taxon>Gammaproteobacteria</taxon>
        <taxon>Vibrionales</taxon>
        <taxon>Vibrionaceae</taxon>
        <taxon>Vibrio</taxon>
    </lineage>
</organism>
<accession>Q9KUZ7</accession>
<evidence type="ECO:0000255" key="1">
    <source>
        <dbReference type="HAMAP-Rule" id="MF_00054"/>
    </source>
</evidence>
<keyword id="KW-0963">Cytoplasm</keyword>
<keyword id="KW-0251">Elongation factor</keyword>
<keyword id="KW-0342">GTP-binding</keyword>
<keyword id="KW-0547">Nucleotide-binding</keyword>
<keyword id="KW-0648">Protein biosynthesis</keyword>
<keyword id="KW-1185">Reference proteome</keyword>
<proteinExistence type="inferred from homology"/>
<comment type="function">
    <text evidence="1">Catalyzes the GTP-dependent ribosomal translocation step during translation elongation. During this step, the ribosome changes from the pre-translocational (PRE) to the post-translocational (POST) state as the newly formed A-site-bound peptidyl-tRNA and P-site-bound deacylated tRNA move to the P and E sites, respectively. Catalyzes the coordinated movement of the two tRNA molecules, the mRNA and conformational changes in the ribosome.</text>
</comment>
<comment type="subcellular location">
    <subcellularLocation>
        <location evidence="1">Cytoplasm</location>
    </subcellularLocation>
</comment>
<comment type="similarity">
    <text evidence="1">Belongs to the TRAFAC class translation factor GTPase superfamily. Classic translation factor GTPase family. EF-G/EF-2 subfamily.</text>
</comment>